<evidence type="ECO:0000250" key="1"/>
<evidence type="ECO:0000255" key="2"/>
<evidence type="ECO:0000305" key="3"/>
<evidence type="ECO:0000305" key="4">
    <source>
    </source>
</evidence>
<evidence type="ECO:0000312" key="5">
    <source>
        <dbReference type="EMBL" id="AAG60415.1"/>
    </source>
</evidence>
<evidence type="ECO:0000312" key="6">
    <source>
        <dbReference type="EMBL" id="AAG60518.1"/>
    </source>
</evidence>
<proteinExistence type="inferred from homology"/>
<sequence>MHCLPVLVILLLLIASTPSVDARPKTKDDVPLASFHGADNANRILRTLWNLRGCCEDKTCCFIG</sequence>
<dbReference type="EMBL" id="AF215097">
    <property type="protein sequence ID" value="AAG60518.1"/>
    <property type="molecule type" value="mRNA"/>
</dbReference>
<dbReference type="EMBL" id="AF214987">
    <property type="protein sequence ID" value="AAG60415.1"/>
    <property type="molecule type" value="mRNA"/>
</dbReference>
<dbReference type="ConoServer" id="674">
    <property type="toxin name" value="Ts-011 precursor"/>
</dbReference>
<dbReference type="GO" id="GO:0005576">
    <property type="term" value="C:extracellular region"/>
    <property type="evidence" value="ECO:0007669"/>
    <property type="project" value="UniProtKB-SubCell"/>
</dbReference>
<dbReference type="GO" id="GO:0090729">
    <property type="term" value="F:toxin activity"/>
    <property type="evidence" value="ECO:0007669"/>
    <property type="project" value="UniProtKB-KW"/>
</dbReference>
<dbReference type="InterPro" id="IPR031565">
    <property type="entry name" value="T-conotoxin"/>
</dbReference>
<dbReference type="Pfam" id="PF16981">
    <property type="entry name" value="Chi-conotoxin"/>
    <property type="match status" value="1"/>
</dbReference>
<accession>Q9BH75</accession>
<reference key="1">
    <citation type="journal article" date="2001" name="Mol. Biol. Evol.">
        <title>Mechanisms for evolving hypervariability: the case of conopeptides.</title>
        <authorList>
            <person name="Conticello S.G."/>
            <person name="Gilad Y."/>
            <person name="Avidan N."/>
            <person name="Ben-Asher E."/>
            <person name="Levy Z."/>
            <person name="Fainzilber M."/>
        </authorList>
    </citation>
    <scope>NUCLEOTIDE SEQUENCE [MRNA]</scope>
    <source>
        <tissue>Venom duct</tissue>
    </source>
</reference>
<comment type="subcellular location">
    <subcellularLocation>
        <location evidence="4">Secreted</location>
    </subcellularLocation>
</comment>
<comment type="tissue specificity">
    <text evidence="4">Expressed by the venom duct.</text>
</comment>
<comment type="domain">
    <text evidence="3">The cysteine framework is V (CC-CC).</text>
</comment>
<comment type="PTM">
    <text evidence="3">Contains 2 disulfide bonds that can be either 'C1-C3, C2-C4' or 'C1-C4, C2-C3', since these disulfide connectivities have been observed for conotoxins with cysteine framework V (for examples, see AC P0DQQ7 and AC P81755).</text>
</comment>
<comment type="similarity">
    <text evidence="3">Belongs to the conotoxin T superfamily.</text>
</comment>
<organism>
    <name type="scientific">Conus tessulatus</name>
    <name type="common">Tessellate cone</name>
    <dbReference type="NCBI Taxonomy" id="101317"/>
    <lineage>
        <taxon>Eukaryota</taxon>
        <taxon>Metazoa</taxon>
        <taxon>Spiralia</taxon>
        <taxon>Lophotrochozoa</taxon>
        <taxon>Mollusca</taxon>
        <taxon>Gastropoda</taxon>
        <taxon>Caenogastropoda</taxon>
        <taxon>Neogastropoda</taxon>
        <taxon>Conoidea</taxon>
        <taxon>Conidae</taxon>
        <taxon>Conus</taxon>
        <taxon>Tesselliconus</taxon>
    </lineage>
</organism>
<keyword id="KW-0027">Amidation</keyword>
<keyword id="KW-0165">Cleavage on pair of basic residues</keyword>
<keyword id="KW-1015">Disulfide bond</keyword>
<keyword id="KW-0964">Secreted</keyword>
<keyword id="KW-0732">Signal</keyword>
<keyword id="KW-0800">Toxin</keyword>
<name>CT011_CONTS</name>
<feature type="signal peptide" evidence="2">
    <location>
        <begin position="1"/>
        <end position="22"/>
    </location>
</feature>
<feature type="propeptide" id="PRO_0000274102" evidence="1">
    <location>
        <begin position="23"/>
        <end position="51"/>
    </location>
</feature>
<feature type="peptide" id="PRO_0000274103" description="Conotoxin Ts-011">
    <location>
        <begin position="53"/>
        <end position="63"/>
    </location>
</feature>
<feature type="modified residue" description="Isoleucine amide" evidence="1">
    <location>
        <position position="63"/>
    </location>
</feature>
<protein>
    <recommendedName>
        <fullName evidence="6">Conotoxin Ts-011</fullName>
    </recommendedName>
    <alternativeName>
        <fullName evidence="5">Ts-D01</fullName>
    </alternativeName>
</protein>